<organism>
    <name type="scientific">Pseudomonas aeruginosa (strain ATCC 15692 / DSM 22644 / CIP 104116 / JCM 14847 / LMG 12228 / 1C / PRS 101 / PAO1)</name>
    <dbReference type="NCBI Taxonomy" id="208964"/>
    <lineage>
        <taxon>Bacteria</taxon>
        <taxon>Pseudomonadati</taxon>
        <taxon>Pseudomonadota</taxon>
        <taxon>Gammaproteobacteria</taxon>
        <taxon>Pseudomonadales</taxon>
        <taxon>Pseudomonadaceae</taxon>
        <taxon>Pseudomonas</taxon>
    </lineage>
</organism>
<evidence type="ECO:0000250" key="1"/>
<evidence type="ECO:0000305" key="2"/>
<feature type="chain" id="PRO_0000097117" description="Pyoverdin chromophore biosynthetic protein PvcC">
    <location>
        <begin position="1"/>
        <end position="500"/>
    </location>
</feature>
<feature type="sequence conflict" description="In Ref. 1; AAC21673." evidence="2" ref="1">
    <original>L</original>
    <variation>F</variation>
    <location>
        <position position="146"/>
    </location>
</feature>
<proteinExistence type="predicted"/>
<comment type="cofactor">
    <cofactor evidence="1">
        <name>FAD</name>
        <dbReference type="ChEBI" id="CHEBI:57692"/>
    </cofactor>
</comment>
<comment type="pathway">
    <text>Siderophore biosynthesis; pyoverdin biosynthesis.</text>
</comment>
<dbReference type="EMBL" id="AF002222">
    <property type="protein sequence ID" value="AAC21673.1"/>
    <property type="molecule type" value="Genomic_DNA"/>
</dbReference>
<dbReference type="EMBL" id="AE004091">
    <property type="protein sequence ID" value="AAG05644.1"/>
    <property type="molecule type" value="Genomic_DNA"/>
</dbReference>
<dbReference type="PIR" id="B83364">
    <property type="entry name" value="B83364"/>
</dbReference>
<dbReference type="RefSeq" id="NP_250946.1">
    <property type="nucleotide sequence ID" value="NC_002516.2"/>
</dbReference>
<dbReference type="RefSeq" id="WP_003113736.1">
    <property type="nucleotide sequence ID" value="NZ_QZGE01000014.1"/>
</dbReference>
<dbReference type="SMR" id="O30372"/>
<dbReference type="STRING" id="208964.PA2256"/>
<dbReference type="PaxDb" id="208964-PA2256"/>
<dbReference type="GeneID" id="878263"/>
<dbReference type="KEGG" id="pae:PA2256"/>
<dbReference type="PATRIC" id="fig|208964.12.peg.2358"/>
<dbReference type="PseudoCAP" id="PA2256"/>
<dbReference type="HOGENOM" id="CLU_023920_2_1_6"/>
<dbReference type="InParanoid" id="O30372"/>
<dbReference type="OrthoDB" id="7233724at2"/>
<dbReference type="PhylomeDB" id="O30372"/>
<dbReference type="BioCyc" id="MetaCyc:MONOMER-20395"/>
<dbReference type="BioCyc" id="PAER208964:G1FZ6-2295-MONOMER"/>
<dbReference type="UniPathway" id="UPA00019"/>
<dbReference type="Proteomes" id="UP000002438">
    <property type="component" value="Chromosome"/>
</dbReference>
<dbReference type="GO" id="GO:0016627">
    <property type="term" value="F:oxidoreductase activity, acting on the CH-CH group of donors"/>
    <property type="evidence" value="ECO:0007669"/>
    <property type="project" value="InterPro"/>
</dbReference>
<dbReference type="GO" id="GO:0002049">
    <property type="term" value="P:pyoverdine biosynthetic process"/>
    <property type="evidence" value="ECO:0007669"/>
    <property type="project" value="UniProtKB-UniPathway"/>
</dbReference>
<dbReference type="Gene3D" id="1.10.3140.10">
    <property type="entry name" value="4-hydroxybutyryl-coa dehydratase, domain 1"/>
    <property type="match status" value="1"/>
</dbReference>
<dbReference type="Gene3D" id="2.40.110.10">
    <property type="entry name" value="Butyryl-CoA Dehydrogenase, subunit A, domain 2"/>
    <property type="match status" value="1"/>
</dbReference>
<dbReference type="Gene3D" id="1.20.140.10">
    <property type="entry name" value="Butyryl-CoA Dehydrogenase, subunit A, domain 3"/>
    <property type="match status" value="1"/>
</dbReference>
<dbReference type="InterPro" id="IPR046373">
    <property type="entry name" value="Acyl-CoA_Oxase/DH_mid-dom_sf"/>
</dbReference>
<dbReference type="InterPro" id="IPR036250">
    <property type="entry name" value="AcylCo_DH-like_C"/>
</dbReference>
<dbReference type="InterPro" id="IPR009100">
    <property type="entry name" value="AcylCoA_DH/oxidase_NM_dom_sf"/>
</dbReference>
<dbReference type="InterPro" id="IPR024677">
    <property type="entry name" value="HpaB/PvcC"/>
</dbReference>
<dbReference type="InterPro" id="IPR004925">
    <property type="entry name" value="HpaB/PvcC/4-BUDH"/>
</dbReference>
<dbReference type="InterPro" id="IPR024719">
    <property type="entry name" value="HpaB/PvcC/4-BUDH_C"/>
</dbReference>
<dbReference type="InterPro" id="IPR024674">
    <property type="entry name" value="HpaB/PvcC/4-BUDH_N"/>
</dbReference>
<dbReference type="PANTHER" id="PTHR36117">
    <property type="entry name" value="4-HYDROXYPHENYLACETATE 3-MONOOXYGENASE-RELATED"/>
    <property type="match status" value="1"/>
</dbReference>
<dbReference type="PANTHER" id="PTHR36117:SF3">
    <property type="entry name" value="4-HYDROXYPHENYLACETATE 3-MONOOXYGENASE-RELATED"/>
    <property type="match status" value="1"/>
</dbReference>
<dbReference type="Pfam" id="PF03241">
    <property type="entry name" value="HpaB"/>
    <property type="match status" value="1"/>
</dbReference>
<dbReference type="Pfam" id="PF11794">
    <property type="entry name" value="HpaB_N"/>
    <property type="match status" value="1"/>
</dbReference>
<dbReference type="PIRSF" id="PIRSF500125">
    <property type="entry name" value="4_HPA_large"/>
    <property type="match status" value="1"/>
</dbReference>
<dbReference type="PIRSF" id="PIRSF000331">
    <property type="entry name" value="HpaA_HpaB"/>
    <property type="match status" value="1"/>
</dbReference>
<dbReference type="SUPFAM" id="SSF47203">
    <property type="entry name" value="Acyl-CoA dehydrogenase C-terminal domain-like"/>
    <property type="match status" value="1"/>
</dbReference>
<dbReference type="SUPFAM" id="SSF56645">
    <property type="entry name" value="Acyl-CoA dehydrogenase NM domain-like"/>
    <property type="match status" value="1"/>
</dbReference>
<protein>
    <recommendedName>
        <fullName>Pyoverdin chromophore biosynthetic protein PvcC</fullName>
    </recommendedName>
</protein>
<reference key="1">
    <citation type="journal article" date="1999" name="J. Bacteriol.">
        <title>The pvc gene cluster of Pseudomonas aeruginosa: role in synthesis of the pyoverdine chromophore and regulation by PtxR and PvdS.</title>
        <authorList>
            <person name="Stintzi A."/>
            <person name="Johnson Z."/>
            <person name="Stonehouse M."/>
            <person name="Ochsner U."/>
            <person name="Meyer J.M."/>
            <person name="Vasil M.L."/>
            <person name="Poole K."/>
        </authorList>
    </citation>
    <scope>NUCLEOTIDE SEQUENCE [GENOMIC DNA]</scope>
    <source>
        <strain>ATCC 15692 / DSM 22644 / CIP 104116 / JCM 14847 / LMG 12228 / 1C / PRS 101 / PAO1</strain>
    </source>
</reference>
<reference key="2">
    <citation type="journal article" date="2000" name="Nature">
        <title>Complete genome sequence of Pseudomonas aeruginosa PAO1, an opportunistic pathogen.</title>
        <authorList>
            <person name="Stover C.K."/>
            <person name="Pham X.-Q.T."/>
            <person name="Erwin A.L."/>
            <person name="Mizoguchi S.D."/>
            <person name="Warrener P."/>
            <person name="Hickey M.J."/>
            <person name="Brinkman F.S.L."/>
            <person name="Hufnagle W.O."/>
            <person name="Kowalik D.J."/>
            <person name="Lagrou M."/>
            <person name="Garber R.L."/>
            <person name="Goltry L."/>
            <person name="Tolentino E."/>
            <person name="Westbrock-Wadman S."/>
            <person name="Yuan Y."/>
            <person name="Brody L.L."/>
            <person name="Coulter S.N."/>
            <person name="Folger K.R."/>
            <person name="Kas A."/>
            <person name="Larbig K."/>
            <person name="Lim R.M."/>
            <person name="Smith K.A."/>
            <person name="Spencer D.H."/>
            <person name="Wong G.K.-S."/>
            <person name="Wu Z."/>
            <person name="Paulsen I.T."/>
            <person name="Reizer J."/>
            <person name="Saier M.H. Jr."/>
            <person name="Hancock R.E.W."/>
            <person name="Lory S."/>
            <person name="Olson M.V."/>
        </authorList>
    </citation>
    <scope>NUCLEOTIDE SEQUENCE [LARGE SCALE GENOMIC DNA]</scope>
    <source>
        <strain>ATCC 15692 / DSM 22644 / CIP 104116 / JCM 14847 / LMG 12228 / 1C / PRS 101 / PAO1</strain>
    </source>
</reference>
<name>PVCC_PSEAE</name>
<accession>O30372</accession>
<sequence length="500" mass="55778">MSHSVPNALMTGADYLDSLRDGRQVYLNGERVADVTRHRAFRNACRSIAGLYDGLHGEQRDVLTRVDAQGRRSHRFFTPAQNAEDLLGAREAIGCWSRMTYGFMGRTPDYKAAFMSGLEAGAGFYGDYRHNACAWHRAFADRGLFLNHAIINPPLDRSKAIHEMRDVFVHVERETDQGIVVSGAKMLATGSAITNATFVAPVASAQMEAGKAEDFAVVFFARMDNPGLRLMCRPSYEERASSPFDYPLSSRFDENDSVLLFDKALIPWEDVLVYRDLRRATGFYAESGFANLYNFQSGIRLGVKLELMIGLLSLGVRANGTQSFRGIQAALGELIALQHLLQALTTAMARDPERNAAGSAVPRLEYANALRIQVPQIWKRVRELLESALGGAPLVTVSGAADLRDGEARRLVDSYYRGAELEPEQRLKLFKLIWDATGSEFGARHAVYESHYSGNAEQIRLDSLAWASRRGHLAYCEAMVQRCMADYDIHGWLRGPWQHD</sequence>
<gene>
    <name type="primary">pvcC</name>
    <name type="ordered locus">PA2256</name>
</gene>
<keyword id="KW-0274">FAD</keyword>
<keyword id="KW-0285">Flavoprotein</keyword>
<keyword id="KW-0560">Oxidoreductase</keyword>
<keyword id="KW-1185">Reference proteome</keyword>